<accession>Q9LU92</accession>
<proteinExistence type="evidence at transcript level"/>
<gene>
    <name type="primary">GT-4</name>
    <name type="ordered locus">At3g25990</name>
    <name type="ORF">MPE11.20</name>
</gene>
<organism>
    <name type="scientific">Arabidopsis thaliana</name>
    <name type="common">Mouse-ear cress</name>
    <dbReference type="NCBI Taxonomy" id="3702"/>
    <lineage>
        <taxon>Eukaryota</taxon>
        <taxon>Viridiplantae</taxon>
        <taxon>Streptophyta</taxon>
        <taxon>Embryophyta</taxon>
        <taxon>Tracheophyta</taxon>
        <taxon>Spermatophyta</taxon>
        <taxon>Magnoliopsida</taxon>
        <taxon>eudicotyledons</taxon>
        <taxon>Gunneridae</taxon>
        <taxon>Pentapetalae</taxon>
        <taxon>rosids</taxon>
        <taxon>malvids</taxon>
        <taxon>Brassicales</taxon>
        <taxon>Brassicaceae</taxon>
        <taxon>Camelineae</taxon>
        <taxon>Arabidopsis</taxon>
    </lineage>
</organism>
<protein>
    <recommendedName>
        <fullName>Trihelix transcription factor GT-4</fullName>
    </recommendedName>
    <alternativeName>
        <fullName>Trihelix DNA-binding protein GT-4</fullName>
    </alternativeName>
</protein>
<sequence>MFVSDNNNPSRDINMMIGDVTSNGDLQPHQIILGESSGGEDHEIIKAPKKRAETWAQDETRTLISLRREMDNLFNTSKSNKHLWEQISKKMREKGFDRSPSMCTDKWRNILKEFKKAKQHEDKATSGGSTKMSYYNEIEDIFRERKKKVAFYKSPATTTPSSAKVDSFMQFTDKGFEDTGISFTSVEANGRPTLNLETELDHDGLPLPIAADPITANGVPPWNWRDTPGNGVDGQPFAGRIITVKFGDYTRRVGIDGTAEAIKEAIRSAFRLRTRRAFWLEDEEQVIRSLDRDMPLGNYILRIDEGIAVRVCHYDESDPLPVHQEEKIFYTEEDYRDFLARRGWTCLREFDAFQNIDNMDELQSGRLYRGMR</sequence>
<name>TGT4_ARATH</name>
<reference key="1">
    <citation type="submission" date="2001-09" db="EMBL/GenBank/DDBJ databases">
        <title>A novel GT-box binding factor.</title>
        <authorList>
            <person name="Murata J."/>
            <person name="Takase H."/>
            <person name="Hiratsuka K."/>
        </authorList>
    </citation>
    <scope>NUCLEOTIDE SEQUENCE [MRNA]</scope>
</reference>
<reference key="2">
    <citation type="journal article" date="2000" name="DNA Res.">
        <title>Structural analysis of Arabidopsis thaliana chromosome 3. I. Sequence features of the regions of 4,504,864 bp covered by sixty P1 and TAC clones.</title>
        <authorList>
            <person name="Sato S."/>
            <person name="Nakamura Y."/>
            <person name="Kaneko T."/>
            <person name="Katoh T."/>
            <person name="Asamizu E."/>
            <person name="Tabata S."/>
        </authorList>
    </citation>
    <scope>NUCLEOTIDE SEQUENCE [LARGE SCALE GENOMIC DNA]</scope>
    <source>
        <strain>cv. Columbia</strain>
    </source>
</reference>
<reference key="3">
    <citation type="journal article" date="2017" name="Plant J.">
        <title>Araport11: a complete reannotation of the Arabidopsis thaliana reference genome.</title>
        <authorList>
            <person name="Cheng C.Y."/>
            <person name="Krishnakumar V."/>
            <person name="Chan A.P."/>
            <person name="Thibaud-Nissen F."/>
            <person name="Schobel S."/>
            <person name="Town C.D."/>
        </authorList>
    </citation>
    <scope>GENOME REANNOTATION</scope>
    <source>
        <strain>cv. Columbia</strain>
    </source>
</reference>
<feature type="chain" id="PRO_0000401382" description="Trihelix transcription factor GT-4">
    <location>
        <begin position="1"/>
        <end position="372"/>
    </location>
</feature>
<feature type="domain" description="Myb-like" evidence="3">
    <location>
        <begin position="47"/>
        <end position="111"/>
    </location>
</feature>
<feature type="modified residue" description="Phosphoserine" evidence="2">
    <location>
        <position position="167"/>
    </location>
</feature>
<dbReference type="EMBL" id="AB072370">
    <property type="protein sequence ID" value="BAB91255.1"/>
    <property type="molecule type" value="mRNA"/>
</dbReference>
<dbReference type="EMBL" id="AB023041">
    <property type="protein sequence ID" value="BAB01062.1"/>
    <property type="molecule type" value="Genomic_DNA"/>
</dbReference>
<dbReference type="EMBL" id="CP002686">
    <property type="protein sequence ID" value="AEE77099.1"/>
    <property type="molecule type" value="Genomic_DNA"/>
</dbReference>
<dbReference type="RefSeq" id="NP_189228.1">
    <property type="nucleotide sequence ID" value="NM_113503.3"/>
</dbReference>
<dbReference type="SMR" id="Q9LU92"/>
<dbReference type="BioGRID" id="7527">
    <property type="interactions" value="5"/>
</dbReference>
<dbReference type="IntAct" id="Q9LU92">
    <property type="interactions" value="4"/>
</dbReference>
<dbReference type="STRING" id="3702.Q9LU92"/>
<dbReference type="PaxDb" id="3702-AT3G25990.1"/>
<dbReference type="ProteomicsDB" id="246436"/>
<dbReference type="DNASU" id="822196"/>
<dbReference type="EnsemblPlants" id="AT3G25990.1">
    <property type="protein sequence ID" value="AT3G25990.1"/>
    <property type="gene ID" value="AT3G25990"/>
</dbReference>
<dbReference type="GeneID" id="822196"/>
<dbReference type="Gramene" id="AT3G25990.1">
    <property type="protein sequence ID" value="AT3G25990.1"/>
    <property type="gene ID" value="AT3G25990"/>
</dbReference>
<dbReference type="KEGG" id="ath:AT3G25990"/>
<dbReference type="Araport" id="AT3G25990"/>
<dbReference type="TAIR" id="AT3G25990"/>
<dbReference type="eggNOG" id="KOG4282">
    <property type="taxonomic scope" value="Eukaryota"/>
</dbReference>
<dbReference type="HOGENOM" id="CLU_052933_1_0_1"/>
<dbReference type="InParanoid" id="Q9LU92"/>
<dbReference type="OMA" id="ETWAQDE"/>
<dbReference type="PhylomeDB" id="Q9LU92"/>
<dbReference type="PRO" id="PR:Q9LU92"/>
<dbReference type="Proteomes" id="UP000006548">
    <property type="component" value="Chromosome 3"/>
</dbReference>
<dbReference type="ExpressionAtlas" id="Q9LU92">
    <property type="expression patterns" value="baseline and differential"/>
</dbReference>
<dbReference type="GO" id="GO:0005634">
    <property type="term" value="C:nucleus"/>
    <property type="evidence" value="ECO:0007669"/>
    <property type="project" value="UniProtKB-SubCell"/>
</dbReference>
<dbReference type="GO" id="GO:0003677">
    <property type="term" value="F:DNA binding"/>
    <property type="evidence" value="ECO:0007669"/>
    <property type="project" value="UniProtKB-KW"/>
</dbReference>
<dbReference type="GO" id="GO:0003700">
    <property type="term" value="F:DNA-binding transcription factor activity"/>
    <property type="evidence" value="ECO:0000250"/>
    <property type="project" value="TAIR"/>
</dbReference>
<dbReference type="GO" id="GO:0006355">
    <property type="term" value="P:regulation of DNA-templated transcription"/>
    <property type="evidence" value="ECO:0000304"/>
    <property type="project" value="TAIR"/>
</dbReference>
<dbReference type="CDD" id="cd12203">
    <property type="entry name" value="GT1"/>
    <property type="match status" value="1"/>
</dbReference>
<dbReference type="FunFam" id="1.10.10.60:FF:000162">
    <property type="entry name" value="trihelix transcription factor GT-1"/>
    <property type="match status" value="1"/>
</dbReference>
<dbReference type="Gene3D" id="1.10.10.60">
    <property type="entry name" value="Homeodomain-like"/>
    <property type="match status" value="1"/>
</dbReference>
<dbReference type="InterPro" id="IPR044822">
    <property type="entry name" value="Myb_DNA-bind_4"/>
</dbReference>
<dbReference type="InterPro" id="IPR001005">
    <property type="entry name" value="SANT/Myb"/>
</dbReference>
<dbReference type="PANTHER" id="PTHR21654">
    <property type="entry name" value="FI21293P1"/>
    <property type="match status" value="1"/>
</dbReference>
<dbReference type="PANTHER" id="PTHR21654:SF97">
    <property type="entry name" value="TRIHELIX TRANSCRIPTION FACTOR GT-4"/>
    <property type="match status" value="1"/>
</dbReference>
<dbReference type="Pfam" id="PF13837">
    <property type="entry name" value="Myb_DNA-bind_4"/>
    <property type="match status" value="1"/>
</dbReference>
<dbReference type="SMART" id="SM00717">
    <property type="entry name" value="SANT"/>
    <property type="match status" value="1"/>
</dbReference>
<dbReference type="PROSITE" id="PS50090">
    <property type="entry name" value="MYB_LIKE"/>
    <property type="match status" value="1"/>
</dbReference>
<evidence type="ECO:0000250" key="1"/>
<evidence type="ECO:0000250" key="2">
    <source>
        <dbReference type="UniProtKB" id="Q9FX53"/>
    </source>
</evidence>
<evidence type="ECO:0000255" key="3">
    <source>
        <dbReference type="PROSITE-ProRule" id="PRU00133"/>
    </source>
</evidence>
<evidence type="ECO:0000305" key="4"/>
<keyword id="KW-0238">DNA-binding</keyword>
<keyword id="KW-0539">Nucleus</keyword>
<keyword id="KW-0597">Phosphoprotein</keyword>
<keyword id="KW-1185">Reference proteome</keyword>
<keyword id="KW-0804">Transcription</keyword>
<keyword id="KW-0805">Transcription regulation</keyword>
<comment type="function">
    <text evidence="1">Probable transcription factor that binds specific DNA sequence.</text>
</comment>
<comment type="subcellular location">
    <subcellularLocation>
        <location evidence="4">Nucleus</location>
    </subcellularLocation>
</comment>